<comment type="function">
    <text evidence="1">Catalyzes a mechanistically unusual reaction, the ATP-dependent insertion of CO2 between the N7 and N8 nitrogen atoms of 7,8-diaminopelargonic acid (DAPA, also called 7,8-diammoniononanoate) to form a ureido ring.</text>
</comment>
<comment type="catalytic activity">
    <reaction evidence="1">
        <text>(7R,8S)-7,8-diammoniononanoate + CO2 + ATP = (4R,5S)-dethiobiotin + ADP + phosphate + 3 H(+)</text>
        <dbReference type="Rhea" id="RHEA:15805"/>
        <dbReference type="ChEBI" id="CHEBI:15378"/>
        <dbReference type="ChEBI" id="CHEBI:16526"/>
        <dbReference type="ChEBI" id="CHEBI:30616"/>
        <dbReference type="ChEBI" id="CHEBI:43474"/>
        <dbReference type="ChEBI" id="CHEBI:149469"/>
        <dbReference type="ChEBI" id="CHEBI:149473"/>
        <dbReference type="ChEBI" id="CHEBI:456216"/>
        <dbReference type="EC" id="6.3.3.3"/>
    </reaction>
</comment>
<comment type="cofactor">
    <cofactor evidence="1">
        <name>Mg(2+)</name>
        <dbReference type="ChEBI" id="CHEBI:18420"/>
    </cofactor>
</comment>
<comment type="pathway">
    <text evidence="1">Cofactor biosynthesis; biotin biosynthesis; biotin from 7,8-diaminononanoate: step 1/2.</text>
</comment>
<comment type="subunit">
    <text evidence="1">Homodimer.</text>
</comment>
<comment type="subcellular location">
    <subcellularLocation>
        <location evidence="1">Cytoplasm</location>
    </subcellularLocation>
</comment>
<comment type="similarity">
    <text evidence="1">Belongs to the dethiobiotin synthetase family.</text>
</comment>
<sequence length="222" mass="24875">MKGFFITGTDTDVGKTFVTACMLRTLVDKRIRATAYKPVQSGAQWREGKWIAPDVDVYRKVIDVTDEDGCTYLLQTPCSPHLAAKIDGVTIEPDHIVAHVHQLQQTYDFVLVEGAGGIAVPLVDDSFLIAHLAQLLHFPLIIVARASVGTINHTVLTVEYAKAFGLQIAGIIMNGFSTPKNEIEQENIRMIEEMTHVPVIGEIPHMTNFSHQQIVWRKEWWQ</sequence>
<accession>B7GHM4</accession>
<evidence type="ECO:0000255" key="1">
    <source>
        <dbReference type="HAMAP-Rule" id="MF_00336"/>
    </source>
</evidence>
<dbReference type="EC" id="6.3.3.3" evidence="1"/>
<dbReference type="EMBL" id="CP000922">
    <property type="protein sequence ID" value="ACJ33446.1"/>
    <property type="molecule type" value="Genomic_DNA"/>
</dbReference>
<dbReference type="RefSeq" id="WP_012574709.1">
    <property type="nucleotide sequence ID" value="NC_011567.1"/>
</dbReference>
<dbReference type="SMR" id="B7GHM4"/>
<dbReference type="STRING" id="491915.Aflv_1070"/>
<dbReference type="GeneID" id="7037327"/>
<dbReference type="KEGG" id="afl:Aflv_1070"/>
<dbReference type="PATRIC" id="fig|491915.6.peg.1092"/>
<dbReference type="eggNOG" id="COG0132">
    <property type="taxonomic scope" value="Bacteria"/>
</dbReference>
<dbReference type="HOGENOM" id="CLU_072551_3_0_9"/>
<dbReference type="UniPathway" id="UPA00078">
    <property type="reaction ID" value="UER00161"/>
</dbReference>
<dbReference type="Proteomes" id="UP000000742">
    <property type="component" value="Chromosome"/>
</dbReference>
<dbReference type="GO" id="GO:0005829">
    <property type="term" value="C:cytosol"/>
    <property type="evidence" value="ECO:0007669"/>
    <property type="project" value="TreeGrafter"/>
</dbReference>
<dbReference type="GO" id="GO:0005524">
    <property type="term" value="F:ATP binding"/>
    <property type="evidence" value="ECO:0007669"/>
    <property type="project" value="UniProtKB-UniRule"/>
</dbReference>
<dbReference type="GO" id="GO:0004141">
    <property type="term" value="F:dethiobiotin synthase activity"/>
    <property type="evidence" value="ECO:0007669"/>
    <property type="project" value="UniProtKB-UniRule"/>
</dbReference>
<dbReference type="GO" id="GO:0000287">
    <property type="term" value="F:magnesium ion binding"/>
    <property type="evidence" value="ECO:0007669"/>
    <property type="project" value="UniProtKB-UniRule"/>
</dbReference>
<dbReference type="GO" id="GO:0009102">
    <property type="term" value="P:biotin biosynthetic process"/>
    <property type="evidence" value="ECO:0007669"/>
    <property type="project" value="UniProtKB-UniRule"/>
</dbReference>
<dbReference type="CDD" id="cd03109">
    <property type="entry name" value="DTBS"/>
    <property type="match status" value="1"/>
</dbReference>
<dbReference type="FunFam" id="3.40.50.300:FF:000292">
    <property type="entry name" value="ATP-dependent dethiobiotin synthetase BioD"/>
    <property type="match status" value="1"/>
</dbReference>
<dbReference type="Gene3D" id="3.40.50.300">
    <property type="entry name" value="P-loop containing nucleotide triphosphate hydrolases"/>
    <property type="match status" value="1"/>
</dbReference>
<dbReference type="HAMAP" id="MF_00336">
    <property type="entry name" value="BioD"/>
    <property type="match status" value="1"/>
</dbReference>
<dbReference type="InterPro" id="IPR004472">
    <property type="entry name" value="DTB_synth_BioD"/>
</dbReference>
<dbReference type="InterPro" id="IPR027417">
    <property type="entry name" value="P-loop_NTPase"/>
</dbReference>
<dbReference type="NCBIfam" id="TIGR00347">
    <property type="entry name" value="bioD"/>
    <property type="match status" value="1"/>
</dbReference>
<dbReference type="PANTHER" id="PTHR43210:SF2">
    <property type="entry name" value="ATP-DEPENDENT DETHIOBIOTIN SYNTHETASE BIOD 2"/>
    <property type="match status" value="1"/>
</dbReference>
<dbReference type="PANTHER" id="PTHR43210">
    <property type="entry name" value="DETHIOBIOTIN SYNTHETASE"/>
    <property type="match status" value="1"/>
</dbReference>
<dbReference type="Pfam" id="PF13500">
    <property type="entry name" value="AAA_26"/>
    <property type="match status" value="1"/>
</dbReference>
<dbReference type="PIRSF" id="PIRSF006755">
    <property type="entry name" value="DTB_synth"/>
    <property type="match status" value="1"/>
</dbReference>
<dbReference type="SUPFAM" id="SSF52540">
    <property type="entry name" value="P-loop containing nucleoside triphosphate hydrolases"/>
    <property type="match status" value="1"/>
</dbReference>
<name>BIOD_ANOFW</name>
<keyword id="KW-0067">ATP-binding</keyword>
<keyword id="KW-0093">Biotin biosynthesis</keyword>
<keyword id="KW-0963">Cytoplasm</keyword>
<keyword id="KW-0436">Ligase</keyword>
<keyword id="KW-0460">Magnesium</keyword>
<keyword id="KW-0479">Metal-binding</keyword>
<keyword id="KW-0547">Nucleotide-binding</keyword>
<protein>
    <recommendedName>
        <fullName evidence="1">ATP-dependent dethiobiotin synthetase BioD</fullName>
        <ecNumber evidence="1">6.3.3.3</ecNumber>
    </recommendedName>
    <alternativeName>
        <fullName evidence="1">DTB synthetase</fullName>
        <shortName evidence="1">DTBS</shortName>
    </alternativeName>
    <alternativeName>
        <fullName evidence="1">Dethiobiotin synthase</fullName>
    </alternativeName>
</protein>
<gene>
    <name evidence="1" type="primary">bioD</name>
    <name type="ordered locus">Aflv_1070</name>
</gene>
<proteinExistence type="inferred from homology"/>
<reference key="1">
    <citation type="journal article" date="2008" name="Genome Biol.">
        <title>Encapsulated in silica: genome, proteome and physiology of the thermophilic bacterium Anoxybacillus flavithermus WK1.</title>
        <authorList>
            <person name="Saw J.H."/>
            <person name="Mountain B.W."/>
            <person name="Feng L."/>
            <person name="Omelchenko M.V."/>
            <person name="Hou S."/>
            <person name="Saito J.A."/>
            <person name="Stott M.B."/>
            <person name="Li D."/>
            <person name="Zhao G."/>
            <person name="Wu J."/>
            <person name="Galperin M.Y."/>
            <person name="Koonin E.V."/>
            <person name="Makarova K.S."/>
            <person name="Wolf Y.I."/>
            <person name="Rigden D.J."/>
            <person name="Dunfield P.F."/>
            <person name="Wang L."/>
            <person name="Alam M."/>
        </authorList>
    </citation>
    <scope>NUCLEOTIDE SEQUENCE [LARGE SCALE GENOMIC DNA]</scope>
    <source>
        <strain>DSM 21510 / WK1</strain>
    </source>
</reference>
<feature type="chain" id="PRO_1000119855" description="ATP-dependent dethiobiotin synthetase BioD">
    <location>
        <begin position="1"/>
        <end position="222"/>
    </location>
</feature>
<feature type="active site" evidence="1">
    <location>
        <position position="37"/>
    </location>
</feature>
<feature type="binding site" evidence="1">
    <location>
        <begin position="12"/>
        <end position="17"/>
    </location>
    <ligand>
        <name>ATP</name>
        <dbReference type="ChEBI" id="CHEBI:30616"/>
    </ligand>
</feature>
<feature type="binding site" evidence="1">
    <location>
        <position position="16"/>
    </location>
    <ligand>
        <name>Mg(2+)</name>
        <dbReference type="ChEBI" id="CHEBI:18420"/>
    </ligand>
</feature>
<feature type="binding site" evidence="1">
    <location>
        <position position="41"/>
    </location>
    <ligand>
        <name>substrate</name>
    </ligand>
</feature>
<feature type="binding site" evidence="1">
    <location>
        <position position="54"/>
    </location>
    <ligand>
        <name>ATP</name>
        <dbReference type="ChEBI" id="CHEBI:30616"/>
    </ligand>
</feature>
<feature type="binding site" evidence="1">
    <location>
        <position position="54"/>
    </location>
    <ligand>
        <name>Mg(2+)</name>
        <dbReference type="ChEBI" id="CHEBI:18420"/>
    </ligand>
</feature>
<feature type="binding site" evidence="1">
    <location>
        <begin position="113"/>
        <end position="116"/>
    </location>
    <ligand>
        <name>ATP</name>
        <dbReference type="ChEBI" id="CHEBI:30616"/>
    </ligand>
</feature>
<feature type="binding site" evidence="1">
    <location>
        <position position="113"/>
    </location>
    <ligand>
        <name>Mg(2+)</name>
        <dbReference type="ChEBI" id="CHEBI:18420"/>
    </ligand>
</feature>
<organism>
    <name type="scientific">Anoxybacillus flavithermus (strain DSM 21510 / WK1)</name>
    <dbReference type="NCBI Taxonomy" id="491915"/>
    <lineage>
        <taxon>Bacteria</taxon>
        <taxon>Bacillati</taxon>
        <taxon>Bacillota</taxon>
        <taxon>Bacilli</taxon>
        <taxon>Bacillales</taxon>
        <taxon>Anoxybacillaceae</taxon>
        <taxon>Anoxybacillus</taxon>
    </lineage>
</organism>